<organism>
    <name type="scientific">Dictyostelium discoideum</name>
    <name type="common">Social amoeba</name>
    <dbReference type="NCBI Taxonomy" id="44689"/>
    <lineage>
        <taxon>Eukaryota</taxon>
        <taxon>Amoebozoa</taxon>
        <taxon>Evosea</taxon>
        <taxon>Eumycetozoa</taxon>
        <taxon>Dictyostelia</taxon>
        <taxon>Dictyosteliales</taxon>
        <taxon>Dictyosteliaceae</taxon>
        <taxon>Dictyostelium</taxon>
    </lineage>
</organism>
<proteinExistence type="evidence at transcript level"/>
<dbReference type="EMBL" id="AY282574">
    <property type="protein sequence ID" value="AAP40296.1"/>
    <property type="molecule type" value="Genomic_DNA"/>
</dbReference>
<dbReference type="EMBL" id="AAFI02000003">
    <property type="protein sequence ID" value="EAL73186.1"/>
    <property type="molecule type" value="Genomic_DNA"/>
</dbReference>
<dbReference type="RefSeq" id="XP_647418.1">
    <property type="nucleotide sequence ID" value="XM_642326.1"/>
</dbReference>
<dbReference type="FunCoup" id="Q55FW5">
    <property type="interactions" value="201"/>
</dbReference>
<dbReference type="CAZy" id="CBM13">
    <property type="family name" value="Carbohydrate-Binding Module Family 13"/>
</dbReference>
<dbReference type="PaxDb" id="44689-DDB0191523"/>
<dbReference type="EnsemblProtists" id="EAL73186">
    <property type="protein sequence ID" value="EAL73186"/>
    <property type="gene ID" value="DDB_G0267466"/>
</dbReference>
<dbReference type="GeneID" id="8616225"/>
<dbReference type="KEGG" id="ddi:DDB_G0267466"/>
<dbReference type="dictyBase" id="DDB_G0267466">
    <property type="gene designation" value="cupA"/>
</dbReference>
<dbReference type="VEuPathDB" id="AmoebaDB:DDB_G0289283"/>
<dbReference type="HOGENOM" id="CLU_649610_0_0_1"/>
<dbReference type="InParanoid" id="Q55FW5"/>
<dbReference type="PhylomeDB" id="Q55FW5"/>
<dbReference type="PRO" id="PR:Q55FW5"/>
<dbReference type="Proteomes" id="UP000002195">
    <property type="component" value="Chromosome 1"/>
</dbReference>
<dbReference type="GO" id="GO:0005737">
    <property type="term" value="C:cytoplasm"/>
    <property type="evidence" value="ECO:0000314"/>
    <property type="project" value="dictyBase"/>
</dbReference>
<dbReference type="GO" id="GO:0016020">
    <property type="term" value="C:membrane"/>
    <property type="evidence" value="ECO:0007669"/>
    <property type="project" value="UniProtKB-SubCell"/>
</dbReference>
<dbReference type="GO" id="GO:0005634">
    <property type="term" value="C:nucleus"/>
    <property type="evidence" value="ECO:0000314"/>
    <property type="project" value="dictyBase"/>
</dbReference>
<dbReference type="GO" id="GO:0030246">
    <property type="term" value="F:carbohydrate binding"/>
    <property type="evidence" value="ECO:0007669"/>
    <property type="project" value="UniProtKB-KW"/>
</dbReference>
<dbReference type="GO" id="GO:0043157">
    <property type="term" value="P:response to cation stress"/>
    <property type="evidence" value="ECO:0000314"/>
    <property type="project" value="dictyBase"/>
</dbReference>
<dbReference type="FunFam" id="2.80.10.50:FF:000086">
    <property type="entry name" value="Calcium up-regulated protein A"/>
    <property type="match status" value="1"/>
</dbReference>
<dbReference type="FunFam" id="2.80.10.50:FF:000098">
    <property type="entry name" value="Calcium up-regulated protein A"/>
    <property type="match status" value="1"/>
</dbReference>
<dbReference type="Gene3D" id="2.80.10.50">
    <property type="match status" value="2"/>
</dbReference>
<dbReference type="InterPro" id="IPR051780">
    <property type="entry name" value="Ca_Up-reg_Membrane_Reg"/>
</dbReference>
<dbReference type="InterPro" id="IPR035992">
    <property type="entry name" value="Ricin_B-like_lectins"/>
</dbReference>
<dbReference type="InterPro" id="IPR000772">
    <property type="entry name" value="Ricin_B_lectin"/>
</dbReference>
<dbReference type="PANTHER" id="PTHR31599">
    <property type="entry name" value="CALCIUM UP-REGULATED PROTEIN A-RELATED"/>
    <property type="match status" value="1"/>
</dbReference>
<dbReference type="PANTHER" id="PTHR31599:SF2">
    <property type="entry name" value="CALCIUM UP-REGULATED PROTEIN A-RELATED"/>
    <property type="match status" value="1"/>
</dbReference>
<dbReference type="Pfam" id="PF00652">
    <property type="entry name" value="Ricin_B_lectin"/>
    <property type="match status" value="1"/>
</dbReference>
<dbReference type="SMART" id="SM00458">
    <property type="entry name" value="RICIN"/>
    <property type="match status" value="2"/>
</dbReference>
<dbReference type="SUPFAM" id="SSF50370">
    <property type="entry name" value="Ricin B-like lectins"/>
    <property type="match status" value="2"/>
</dbReference>
<dbReference type="PROSITE" id="PS50231">
    <property type="entry name" value="RICIN_B_LECTIN"/>
    <property type="match status" value="2"/>
</dbReference>
<protein>
    <recommendedName>
        <fullName>Calcium up-regulated protein A</fullName>
    </recommendedName>
</protein>
<feature type="chain" id="PRO_0000327949" description="Calcium up-regulated protein A">
    <location>
        <begin position="1"/>
        <end position="423"/>
    </location>
</feature>
<feature type="domain" description="Ricin B-type lectin 1" evidence="2">
    <location>
        <begin position="27"/>
        <end position="147"/>
    </location>
</feature>
<feature type="domain" description="Ricin B-type lectin 2" evidence="2">
    <location>
        <begin position="118"/>
        <end position="251"/>
    </location>
</feature>
<feature type="region of interest" description="Disordered" evidence="3">
    <location>
        <begin position="1"/>
        <end position="27"/>
    </location>
</feature>
<feature type="compositionally biased region" description="Basic and acidic residues" evidence="3">
    <location>
        <begin position="1"/>
        <end position="19"/>
    </location>
</feature>
<feature type="sequence conflict" description="In Ref. 1; AAP40296." evidence="5" ref="1">
    <original>Q</original>
    <variation>K</variation>
    <location>
        <position position="116"/>
    </location>
</feature>
<feature type="sequence conflict" description="In Ref. 1; AAP40296." evidence="5" ref="1">
    <original>K</original>
    <variation>Q</variation>
    <location>
        <position position="164"/>
    </location>
</feature>
<feature type="sequence conflict" description="In Ref. 1; AAP40296." evidence="5" ref="1">
    <original>L</original>
    <variation>F</variation>
    <location>
        <position position="217"/>
    </location>
</feature>
<feature type="sequence conflict" description="In Ref. 1; AAP40296." evidence="5" ref="1">
    <original>Y</original>
    <variation>H</variation>
    <location>
        <position position="233"/>
    </location>
</feature>
<name>CUPA_DICDI</name>
<reference key="1">
    <citation type="journal article" date="2004" name="Eukaryot. Cell">
        <title>The Ca2+/calcineurin-regulated cup gene family in Dictyostelium discoideum and its possible involvement in development.</title>
        <authorList>
            <person name="Coukell B."/>
            <person name="Li Y."/>
            <person name="Moniakis J."/>
            <person name="Cameron A."/>
        </authorList>
    </citation>
    <scope>NUCLEOTIDE SEQUENCE [GENOMIC DNA]</scope>
    <scope>SUBCELLULAR LOCATION</scope>
    <scope>DEVELOPMENTAL STAGE</scope>
    <scope>INDUCTION</scope>
</reference>
<reference key="2">
    <citation type="journal article" date="2005" name="Nature">
        <title>The genome of the social amoeba Dictyostelium discoideum.</title>
        <authorList>
            <person name="Eichinger L."/>
            <person name="Pachebat J.A."/>
            <person name="Gloeckner G."/>
            <person name="Rajandream M.A."/>
            <person name="Sucgang R."/>
            <person name="Berriman M."/>
            <person name="Song J."/>
            <person name="Olsen R."/>
            <person name="Szafranski K."/>
            <person name="Xu Q."/>
            <person name="Tunggal B."/>
            <person name="Kummerfeld S."/>
            <person name="Madera M."/>
            <person name="Konfortov B.A."/>
            <person name="Rivero F."/>
            <person name="Bankier A.T."/>
            <person name="Lehmann R."/>
            <person name="Hamlin N."/>
            <person name="Davies R."/>
            <person name="Gaudet P."/>
            <person name="Fey P."/>
            <person name="Pilcher K."/>
            <person name="Chen G."/>
            <person name="Saunders D."/>
            <person name="Sodergren E.J."/>
            <person name="Davis P."/>
            <person name="Kerhornou A."/>
            <person name="Nie X."/>
            <person name="Hall N."/>
            <person name="Anjard C."/>
            <person name="Hemphill L."/>
            <person name="Bason N."/>
            <person name="Farbrother P."/>
            <person name="Desany B."/>
            <person name="Just E."/>
            <person name="Morio T."/>
            <person name="Rost R."/>
            <person name="Churcher C.M."/>
            <person name="Cooper J."/>
            <person name="Haydock S."/>
            <person name="van Driessche N."/>
            <person name="Cronin A."/>
            <person name="Goodhead I."/>
            <person name="Muzny D.M."/>
            <person name="Mourier T."/>
            <person name="Pain A."/>
            <person name="Lu M."/>
            <person name="Harper D."/>
            <person name="Lindsay R."/>
            <person name="Hauser H."/>
            <person name="James K.D."/>
            <person name="Quiles M."/>
            <person name="Madan Babu M."/>
            <person name="Saito T."/>
            <person name="Buchrieser C."/>
            <person name="Wardroper A."/>
            <person name="Felder M."/>
            <person name="Thangavelu M."/>
            <person name="Johnson D."/>
            <person name="Knights A."/>
            <person name="Loulseged H."/>
            <person name="Mungall K.L."/>
            <person name="Oliver K."/>
            <person name="Price C."/>
            <person name="Quail M.A."/>
            <person name="Urushihara H."/>
            <person name="Hernandez J."/>
            <person name="Rabbinowitsch E."/>
            <person name="Steffen D."/>
            <person name="Sanders M."/>
            <person name="Ma J."/>
            <person name="Kohara Y."/>
            <person name="Sharp S."/>
            <person name="Simmonds M.N."/>
            <person name="Spiegler S."/>
            <person name="Tivey A."/>
            <person name="Sugano S."/>
            <person name="White B."/>
            <person name="Walker D."/>
            <person name="Woodward J.R."/>
            <person name="Winckler T."/>
            <person name="Tanaka Y."/>
            <person name="Shaulsky G."/>
            <person name="Schleicher M."/>
            <person name="Weinstock G.M."/>
            <person name="Rosenthal A."/>
            <person name="Cox E.C."/>
            <person name="Chisholm R.L."/>
            <person name="Gibbs R.A."/>
            <person name="Loomis W.F."/>
            <person name="Platzer M."/>
            <person name="Kay R.R."/>
            <person name="Williams J.G."/>
            <person name="Dear P.H."/>
            <person name="Noegel A.A."/>
            <person name="Barrell B.G."/>
            <person name="Kuspa A."/>
        </authorList>
    </citation>
    <scope>NUCLEOTIDE SEQUENCE [LARGE SCALE GENOMIC DNA]</scope>
    <source>
        <strain>AX4</strain>
    </source>
</reference>
<evidence type="ECO:0000250" key="1"/>
<evidence type="ECO:0000255" key="2">
    <source>
        <dbReference type="PROSITE-ProRule" id="PRU00174"/>
    </source>
</evidence>
<evidence type="ECO:0000256" key="3">
    <source>
        <dbReference type="SAM" id="MobiDB-lite"/>
    </source>
</evidence>
<evidence type="ECO:0000269" key="4">
    <source>
    </source>
</evidence>
<evidence type="ECO:0000305" key="5"/>
<keyword id="KW-0963">Cytoplasm</keyword>
<keyword id="KW-0430">Lectin</keyword>
<keyword id="KW-0472">Membrane</keyword>
<keyword id="KW-1185">Reference proteome</keyword>
<keyword id="KW-0677">Repeat</keyword>
<comment type="function">
    <text evidence="1">May play an important role in stabilizing and/or regulating the cell membrane during Ca(2+) stress or certain stages of development.</text>
</comment>
<comment type="subcellular location">
    <subcellularLocation>
        <location evidence="4">Cytoplasm</location>
    </subcellularLocation>
    <subcellularLocation>
        <location evidence="4">Membrane</location>
        <topology evidence="4">Peripheral membrane protein</topology>
    </subcellularLocation>
    <text>Associates with the cell membrane during Ca(2+) stress and cell aggregation.</text>
</comment>
<comment type="developmental stage">
    <text evidence="4">Expressed at high levels during aggregation and late development and at low levels during the slug stage.</text>
</comment>
<comment type="induction">
    <text evidence="4">Induced by high levels of extracellular Ca(2+).</text>
</comment>
<comment type="similarity">
    <text evidence="5">Belongs to the cup family.</text>
</comment>
<accession>Q55FW5</accession>
<accession>Q7Z1Z8</accession>
<gene>
    <name type="primary">cupA</name>
    <name type="ORF">DDB_G0267466</name>
</gene>
<sequence>MINIEDISKSSNESEEKQLKSTSTSSKPKYPFAAKSLFKGSNNIIPYYLSTSNTFQCVASESIQTWLLSDDGHIFTSSGNFVLDVSSGGYFVELVQLNSNSKTQIWTIDTTNNKIQNQGNGKYLDIDNLNICVAPLNGNATQKWTTFRRAPIPTGNWGYFQSKKLDSNNNYWGLSVLNNSTSYNTSVVMNKVQAKSIGQIWQMTNDGHILSRLDGNLVLDIGPSINGSKTNYYLNTNVYKANDLMQQWGINENNQIFNQYYPNLCIGFVGELGVDSTVNCVLAQPTSASDINFQWIANPTYSLNQIVSEVPEPFPAYTSGDLLASYQYLSNDATNGYTDDIRSLYTSINVSLEHFYVNVSNATCPSSIHSTEDFSNVQNQIKNELTYAINVRLVFDNYSDFYSKLFSQGSTNLTNLANLINVI</sequence>